<proteinExistence type="evidence at transcript level"/>
<reference key="1">
    <citation type="journal article" date="1998" name="J. Bacteriol.">
        <title>Efflux pumps involved in toluene tolerance in Pseudomonas putida DOT-T1E.</title>
        <authorList>
            <person name="Ramos J.L."/>
            <person name="Duque E."/>
            <person name="Godoy P."/>
            <person name="Segura A."/>
        </authorList>
    </citation>
    <scope>NUCLEOTIDE SEQUENCE [GENOMIC DNA]</scope>
    <scope>FUNCTION</scope>
    <source>
        <strain>DOT-T1E</strain>
    </source>
</reference>
<reference key="2">
    <citation type="journal article" date="2013" name="Microb. Biotechnol.">
        <title>Metabolic potential of the organic-solvent tolerant Pseudomonas putida DOT-T1E deduced from its annotated genome.</title>
        <authorList>
            <person name="Udaondo Z."/>
            <person name="Molina L."/>
            <person name="Daniels C."/>
            <person name="Gomez M.J."/>
            <person name="Molina-Henares M.A."/>
            <person name="Matilla M.A."/>
            <person name="Roca A."/>
            <person name="Fernandez M."/>
            <person name="Duque E."/>
            <person name="Segura A."/>
            <person name="Ramos J.L."/>
        </authorList>
    </citation>
    <scope>NUCLEOTIDE SEQUENCE [LARGE SCALE GENOMIC DNA]</scope>
    <source>
        <strain>DOT-T1E</strain>
    </source>
</reference>
<reference key="3">
    <citation type="journal article" date="2001" name="J. Bacteriol.">
        <title>Three efflux pumps are required to provide efficient tolerance to toluene in Pseudomonas putida DOT-T1E.</title>
        <authorList>
            <person name="Rojas A."/>
            <person name="Duque E."/>
            <person name="Mosqueda G."/>
            <person name="Golden G."/>
            <person name="Hurtado A."/>
            <person name="Ramos J.L."/>
            <person name="Segura A."/>
        </authorList>
    </citation>
    <scope>EFFLUX PUMP SUBSTRATES</scope>
    <source>
        <strain>DOT-T1E</strain>
    </source>
</reference>
<reference key="4">
    <citation type="journal article" date="2003" name="Antimicrob. Agents Chemother.">
        <title>Antibiotic-dependent induction of Pseudomonas putida DOT-T1E TtgABC efflux pump is mediated by the drug binding repressor TtgR.</title>
        <authorList>
            <person name="Teran W."/>
            <person name="Felipe A."/>
            <person name="Segura A."/>
            <person name="Rojas A."/>
            <person name="Ramos J.L."/>
            <person name="Gallegos M.T."/>
        </authorList>
    </citation>
    <scope>INDUCTION</scope>
    <source>
        <strain>DOT-T1E</strain>
    </source>
</reference>
<evidence type="ECO:0000255" key="1"/>
<evidence type="ECO:0000269" key="2">
    <source>
    </source>
</evidence>
<evidence type="ECO:0000269" key="3">
    <source>
    </source>
</evidence>
<evidence type="ECO:0000305" key="4"/>
<keyword id="KW-0046">Antibiotic resistance</keyword>
<keyword id="KW-0997">Cell inner membrane</keyword>
<keyword id="KW-1003">Cell membrane</keyword>
<keyword id="KW-0472">Membrane</keyword>
<keyword id="KW-0812">Transmembrane</keyword>
<keyword id="KW-1133">Transmembrane helix</keyword>
<keyword id="KW-0813">Transport</keyword>
<protein>
    <recommendedName>
        <fullName>Toluene efflux pump membrane transporter TtgB</fullName>
    </recommendedName>
</protein>
<dbReference type="EMBL" id="AF031417">
    <property type="protein sequence ID" value="AAC38671.1"/>
    <property type="molecule type" value="Genomic_DNA"/>
</dbReference>
<dbReference type="EMBL" id="CP003734">
    <property type="protein sequence ID" value="AFO46101.1"/>
    <property type="molecule type" value="Genomic_DNA"/>
</dbReference>
<dbReference type="RefSeq" id="WP_014754360.1">
    <property type="nucleotide sequence ID" value="NZ_CP159468.1"/>
</dbReference>
<dbReference type="SMR" id="O52248"/>
<dbReference type="TCDB" id="2.A.6.2.9">
    <property type="family name" value="the resistance-nodulation-cell division (rnd) superfamily"/>
</dbReference>
<dbReference type="KEGG" id="ppx:T1E_0242"/>
<dbReference type="PATRIC" id="fig|1196325.3.peg.243"/>
<dbReference type="HOGENOM" id="CLU_002755_0_1_6"/>
<dbReference type="Proteomes" id="UP000006503">
    <property type="component" value="Chromosome"/>
</dbReference>
<dbReference type="GO" id="GO:0005886">
    <property type="term" value="C:plasma membrane"/>
    <property type="evidence" value="ECO:0007669"/>
    <property type="project" value="UniProtKB-SubCell"/>
</dbReference>
<dbReference type="GO" id="GO:0015562">
    <property type="term" value="F:efflux transmembrane transporter activity"/>
    <property type="evidence" value="ECO:0007669"/>
    <property type="project" value="InterPro"/>
</dbReference>
<dbReference type="GO" id="GO:0042910">
    <property type="term" value="F:xenobiotic transmembrane transporter activity"/>
    <property type="evidence" value="ECO:0007669"/>
    <property type="project" value="TreeGrafter"/>
</dbReference>
<dbReference type="GO" id="GO:0046677">
    <property type="term" value="P:response to antibiotic"/>
    <property type="evidence" value="ECO:0007669"/>
    <property type="project" value="UniProtKB-KW"/>
</dbReference>
<dbReference type="FunFam" id="1.20.1640.10:FF:000001">
    <property type="entry name" value="Efflux pump membrane transporter"/>
    <property type="match status" value="1"/>
</dbReference>
<dbReference type="FunFam" id="3.30.2090.10:FF:000001">
    <property type="entry name" value="Efflux pump membrane transporter"/>
    <property type="match status" value="1"/>
</dbReference>
<dbReference type="FunFam" id="3.30.2090.10:FF:000002">
    <property type="entry name" value="Efflux pump membrane transporter"/>
    <property type="match status" value="1"/>
</dbReference>
<dbReference type="FunFam" id="3.30.70.1430:FF:000001">
    <property type="entry name" value="Efflux pump membrane transporter"/>
    <property type="match status" value="1"/>
</dbReference>
<dbReference type="FunFam" id="3.30.70.1430:FF:000002">
    <property type="entry name" value="Efflux pump membrane transporter"/>
    <property type="match status" value="1"/>
</dbReference>
<dbReference type="Gene3D" id="3.30.70.1430">
    <property type="entry name" value="Multidrug efflux transporter AcrB pore domain"/>
    <property type="match status" value="2"/>
</dbReference>
<dbReference type="Gene3D" id="3.30.70.1440">
    <property type="entry name" value="Multidrug efflux transporter AcrB pore domain"/>
    <property type="match status" value="1"/>
</dbReference>
<dbReference type="Gene3D" id="3.30.70.1320">
    <property type="entry name" value="Multidrug efflux transporter AcrB pore domain like"/>
    <property type="match status" value="1"/>
</dbReference>
<dbReference type="Gene3D" id="3.30.2090.10">
    <property type="entry name" value="Multidrug efflux transporter AcrB TolC docking domain, DN and DC subdomains"/>
    <property type="match status" value="2"/>
</dbReference>
<dbReference type="Gene3D" id="1.20.1640.10">
    <property type="entry name" value="Multidrug efflux transporter AcrB transmembrane domain"/>
    <property type="match status" value="2"/>
</dbReference>
<dbReference type="InterPro" id="IPR027463">
    <property type="entry name" value="AcrB_DN_DC_subdom"/>
</dbReference>
<dbReference type="InterPro" id="IPR001036">
    <property type="entry name" value="Acrflvin-R"/>
</dbReference>
<dbReference type="InterPro" id="IPR004764">
    <property type="entry name" value="MdtF-like"/>
</dbReference>
<dbReference type="NCBIfam" id="TIGR00915">
    <property type="entry name" value="2A0602"/>
    <property type="match status" value="1"/>
</dbReference>
<dbReference type="NCBIfam" id="NF000282">
    <property type="entry name" value="RND_permease_1"/>
    <property type="match status" value="1"/>
</dbReference>
<dbReference type="PANTHER" id="PTHR32063">
    <property type="match status" value="1"/>
</dbReference>
<dbReference type="PANTHER" id="PTHR32063:SF13">
    <property type="entry name" value="MULTIDRUG EFFLUX PUMP SUBUNIT ACRB-RELATED"/>
    <property type="match status" value="1"/>
</dbReference>
<dbReference type="Pfam" id="PF00873">
    <property type="entry name" value="ACR_tran"/>
    <property type="match status" value="1"/>
</dbReference>
<dbReference type="PRINTS" id="PR00702">
    <property type="entry name" value="ACRIFLAVINRP"/>
</dbReference>
<dbReference type="SUPFAM" id="SSF82693">
    <property type="entry name" value="Multidrug efflux transporter AcrB pore domain, PN1, PN2, PC1 and PC2 subdomains"/>
    <property type="match status" value="4"/>
</dbReference>
<dbReference type="SUPFAM" id="SSF82714">
    <property type="entry name" value="Multidrug efflux transporter AcrB TolC docking domain, DN and DC subdomains"/>
    <property type="match status" value="2"/>
</dbReference>
<dbReference type="SUPFAM" id="SSF82866">
    <property type="entry name" value="Multidrug efflux transporter AcrB transmembrane domain"/>
    <property type="match status" value="2"/>
</dbReference>
<feature type="chain" id="PRO_0000161849" description="Toluene efflux pump membrane transporter TtgB">
    <location>
        <begin position="1"/>
        <end position="1050"/>
    </location>
</feature>
<feature type="transmembrane region" description="Helical" evidence="1">
    <location>
        <begin position="10"/>
        <end position="30"/>
    </location>
</feature>
<feature type="transmembrane region" description="Helical" evidence="1">
    <location>
        <begin position="339"/>
        <end position="359"/>
    </location>
</feature>
<feature type="transmembrane region" description="Helical" evidence="1">
    <location>
        <begin position="370"/>
        <end position="390"/>
    </location>
</feature>
<feature type="transmembrane region" description="Helical" evidence="1">
    <location>
        <begin position="393"/>
        <end position="413"/>
    </location>
</feature>
<feature type="transmembrane region" description="Helical" evidence="1">
    <location>
        <begin position="440"/>
        <end position="460"/>
    </location>
</feature>
<feature type="transmembrane region" description="Helical" evidence="1">
    <location>
        <begin position="472"/>
        <end position="492"/>
    </location>
</feature>
<feature type="transmembrane region" description="Helical" evidence="1">
    <location>
        <begin position="539"/>
        <end position="559"/>
    </location>
</feature>
<feature type="transmembrane region" description="Helical" evidence="1">
    <location>
        <begin position="871"/>
        <end position="891"/>
    </location>
</feature>
<feature type="transmembrane region" description="Helical" evidence="1">
    <location>
        <begin position="893"/>
        <end position="913"/>
    </location>
</feature>
<feature type="transmembrane region" description="Helical" evidence="1">
    <location>
        <begin position="923"/>
        <end position="943"/>
    </location>
</feature>
<feature type="transmembrane region" description="Helical" evidence="1">
    <location>
        <begin position="972"/>
        <end position="992"/>
    </location>
</feature>
<feature type="transmembrane region" description="Helical" evidence="1">
    <location>
        <begin position="1004"/>
        <end position="1024"/>
    </location>
</feature>
<organism>
    <name type="scientific">Pseudomonas putida (strain DOT-T1E)</name>
    <dbReference type="NCBI Taxonomy" id="1196325"/>
    <lineage>
        <taxon>Bacteria</taxon>
        <taxon>Pseudomonadati</taxon>
        <taxon>Pseudomonadota</taxon>
        <taxon>Gammaproteobacteria</taxon>
        <taxon>Pseudomonadales</taxon>
        <taxon>Pseudomonadaceae</taxon>
        <taxon>Pseudomonas</taxon>
    </lineage>
</organism>
<sequence length="1050" mass="112808">MSKFFIDRPIFAWVIALVIMLVGALSILKLPINQYPSIAPPAIAIAVTYPGASAQTVQDTVVQVIEQQLNGIDNLRYVSSESNSDGSMTITATFEQGTNPDTAQVQVQNKLNLATPLLPQEVQQQGIRVTKAVKNFLLVIGLVSEDGSMTKDDLANYIVSNMQDPISRTAGVGDFQVFGAQYAMRIWLDPAKLNKFQLTPVDVKTAVAAQNVQVSSGQLGGLPALPGTQLNATIIGKTRLQTAEQFESILLKVNKDGSQVRLGDVAQVGLGGENYAVSAQFNGKPASGLAVKLATGANALDTAKALRETIKGLEPFFPPGVKAVFPYDTTPVVTESISGVIHTLIEAVVLVFLVMYLFLQNFRATIITTMTVPVVLLGTFGILAAAGFSINTLTMFAMVLAIGLLVDDAIVVVENVERVMSEEGLPPKEATKRSMEQIQGALVGIALVLSAVLLPMAFFGGSTGVIYRQFSITIVSAMGLSVLVALIFTPALCATMLKPLKKGEHHTAKGGFFGWFNRNFDRSVNGYERSVGTILRNKVPFLLAYALIVVGMIWLFARIPTAFLPEEDQGVLFAQVQTPAGSSAERTQVVVDQMREYLLKDEADTVSSVFTVNGFNFAGRGQSSGMAFIMLKPWDERSKENSVFALAQRAQQHFFTFRDAMVFAFAPPAVLELGNATGFDVFLQDRGGVGHAKLMEARNQFLAKAAQSKILSAVRPNGLNDEPQYQLTIDDERASALGVTIADINNTLSIALGASYVNDFIDRGRVKKVYIQGEPSARMSPEDLQKWYVRNGAGEMVPFSSFAKGEWTYGSPKLSRYNGVEAMEILGAPAPGYSTGEAMAEVERIAGELPSGIGFSWTGMSYEEKLSGSQMPALFALSVLFVFLCLAALYESWSIPIAVVLVVPLGIIGALIATSLRGLSNDVYFLVGLLTTIGLAAKNAILIVEFAKELHEQGRSLYDAAIEACRMRLRPIIMTSLAFILGVVPLTIASGAGAGSQHAIGTGVIGGMISATVLAIFWVPLFFVAVSSLFGSKEPEKDVTPENPRYEAGQ</sequence>
<accession>O52248</accession>
<accession>I7BZ53</accession>
<comment type="function">
    <text evidence="3">The inner membrane transporter component of a constitutive organic solvent efflux system. Involved in export of toluene, styrene, m-xylene, propylbenzene and ethylbenzene. Also exports AMP and the antibiotics carbenicillin, nalidixic acid, chloramphenicol and tetracycline.</text>
</comment>
<comment type="subcellular location">
    <subcellularLocation>
        <location evidence="4">Cell inner membrane</location>
        <topology evidence="4">Multi-pass membrane protein</topology>
    </subcellularLocation>
</comment>
<comment type="induction">
    <text evidence="2">The ttgABC operon is repressed by toluene; this is mediated by TtgR. The ttgABC operon is induced in response to chloramphenicol and tetracycline.</text>
</comment>
<comment type="similarity">
    <text evidence="4">Belongs to the resistance-nodulation-cell division (RND) (TC 2.A.6) family.</text>
</comment>
<comment type="caution">
    <text evidence="4">There are 4 nearly identical operons in various strains of P.putida. This one and the mepABC operon of strain KT2442-TOL function in solvent and antibiotic efflux; however the arpABC operon of strain S12 functions only in antibiotic efflux. This may be due to different protein expression levels. In strain KT2440 the equivalent operon does not seem to function in toluene efflux.</text>
</comment>
<gene>
    <name type="primary">ttgB</name>
    <name type="ordered locus">T1E_0242</name>
</gene>
<name>TTGB_PSEPT</name>